<reference key="1">
    <citation type="journal article" date="2008" name="J. Bacteriol.">
        <title>Complete genome sequence of uropathogenic Proteus mirabilis, a master of both adherence and motility.</title>
        <authorList>
            <person name="Pearson M.M."/>
            <person name="Sebaihia M."/>
            <person name="Churcher C."/>
            <person name="Quail M.A."/>
            <person name="Seshasayee A.S."/>
            <person name="Luscombe N.M."/>
            <person name="Abdellah Z."/>
            <person name="Arrosmith C."/>
            <person name="Atkin B."/>
            <person name="Chillingworth T."/>
            <person name="Hauser H."/>
            <person name="Jagels K."/>
            <person name="Moule S."/>
            <person name="Mungall K."/>
            <person name="Norbertczak H."/>
            <person name="Rabbinowitsch E."/>
            <person name="Walker D."/>
            <person name="Whithead S."/>
            <person name="Thomson N.R."/>
            <person name="Rather P.N."/>
            <person name="Parkhill J."/>
            <person name="Mobley H.L.T."/>
        </authorList>
    </citation>
    <scope>NUCLEOTIDE SEQUENCE [LARGE SCALE GENOMIC DNA]</scope>
    <source>
        <strain>HI4320</strain>
    </source>
</reference>
<protein>
    <recommendedName>
        <fullName evidence="1">GTPase Der</fullName>
    </recommendedName>
    <alternativeName>
        <fullName evidence="1">GTP-binding protein EngA</fullName>
    </alternativeName>
</protein>
<gene>
    <name evidence="1" type="primary">der</name>
    <name type="synonym">engA</name>
    <name type="ordered locus">PMI1841</name>
</gene>
<proteinExistence type="inferred from homology"/>
<comment type="function">
    <text evidence="1">GTPase that plays an essential role in the late steps of ribosome biogenesis.</text>
</comment>
<comment type="subunit">
    <text evidence="1">Associates with the 50S ribosomal subunit.</text>
</comment>
<comment type="similarity">
    <text evidence="1">Belongs to the TRAFAC class TrmE-Era-EngA-EngB-Septin-like GTPase superfamily. EngA (Der) GTPase family.</text>
</comment>
<evidence type="ECO:0000255" key="1">
    <source>
        <dbReference type="HAMAP-Rule" id="MF_00195"/>
    </source>
</evidence>
<name>DER_PROMH</name>
<feature type="chain" id="PRO_1000099150" description="GTPase Der">
    <location>
        <begin position="1"/>
        <end position="496"/>
    </location>
</feature>
<feature type="domain" description="EngA-type G 1">
    <location>
        <begin position="3"/>
        <end position="166"/>
    </location>
</feature>
<feature type="domain" description="EngA-type G 2">
    <location>
        <begin position="209"/>
        <end position="382"/>
    </location>
</feature>
<feature type="domain" description="KH-like" evidence="1">
    <location>
        <begin position="383"/>
        <end position="467"/>
    </location>
</feature>
<feature type="binding site" evidence="1">
    <location>
        <begin position="9"/>
        <end position="16"/>
    </location>
    <ligand>
        <name>GTP</name>
        <dbReference type="ChEBI" id="CHEBI:37565"/>
        <label>1</label>
    </ligand>
</feature>
<feature type="binding site" evidence="1">
    <location>
        <begin position="56"/>
        <end position="60"/>
    </location>
    <ligand>
        <name>GTP</name>
        <dbReference type="ChEBI" id="CHEBI:37565"/>
        <label>1</label>
    </ligand>
</feature>
<feature type="binding site" evidence="1">
    <location>
        <begin position="118"/>
        <end position="121"/>
    </location>
    <ligand>
        <name>GTP</name>
        <dbReference type="ChEBI" id="CHEBI:37565"/>
        <label>1</label>
    </ligand>
</feature>
<feature type="binding site" evidence="1">
    <location>
        <begin position="215"/>
        <end position="222"/>
    </location>
    <ligand>
        <name>GTP</name>
        <dbReference type="ChEBI" id="CHEBI:37565"/>
        <label>2</label>
    </ligand>
</feature>
<feature type="binding site" evidence="1">
    <location>
        <begin position="262"/>
        <end position="266"/>
    </location>
    <ligand>
        <name>GTP</name>
        <dbReference type="ChEBI" id="CHEBI:37565"/>
        <label>2</label>
    </ligand>
</feature>
<feature type="binding site" evidence="1">
    <location>
        <begin position="327"/>
        <end position="330"/>
    </location>
    <ligand>
        <name>GTP</name>
        <dbReference type="ChEBI" id="CHEBI:37565"/>
        <label>2</label>
    </ligand>
</feature>
<organism>
    <name type="scientific">Proteus mirabilis (strain HI4320)</name>
    <dbReference type="NCBI Taxonomy" id="529507"/>
    <lineage>
        <taxon>Bacteria</taxon>
        <taxon>Pseudomonadati</taxon>
        <taxon>Pseudomonadota</taxon>
        <taxon>Gammaproteobacteria</taxon>
        <taxon>Enterobacterales</taxon>
        <taxon>Morganellaceae</taxon>
        <taxon>Proteus</taxon>
    </lineage>
</organism>
<dbReference type="EMBL" id="AM942759">
    <property type="protein sequence ID" value="CAR43820.1"/>
    <property type="molecule type" value="Genomic_DNA"/>
</dbReference>
<dbReference type="RefSeq" id="WP_012368124.1">
    <property type="nucleotide sequence ID" value="NC_010554.1"/>
</dbReference>
<dbReference type="SMR" id="B4EZS9"/>
<dbReference type="EnsemblBacteria" id="CAR43820">
    <property type="protein sequence ID" value="CAR43820"/>
    <property type="gene ID" value="PMI1841"/>
</dbReference>
<dbReference type="GeneID" id="6800092"/>
<dbReference type="KEGG" id="pmr:PMI1841"/>
<dbReference type="PATRIC" id="fig|529507.6.peg.1793"/>
<dbReference type="eggNOG" id="COG1160">
    <property type="taxonomic scope" value="Bacteria"/>
</dbReference>
<dbReference type="HOGENOM" id="CLU_016077_6_2_6"/>
<dbReference type="Proteomes" id="UP000008319">
    <property type="component" value="Chromosome"/>
</dbReference>
<dbReference type="GO" id="GO:0005525">
    <property type="term" value="F:GTP binding"/>
    <property type="evidence" value="ECO:0007669"/>
    <property type="project" value="UniProtKB-UniRule"/>
</dbReference>
<dbReference type="GO" id="GO:0043022">
    <property type="term" value="F:ribosome binding"/>
    <property type="evidence" value="ECO:0007669"/>
    <property type="project" value="TreeGrafter"/>
</dbReference>
<dbReference type="GO" id="GO:0042254">
    <property type="term" value="P:ribosome biogenesis"/>
    <property type="evidence" value="ECO:0007669"/>
    <property type="project" value="UniProtKB-KW"/>
</dbReference>
<dbReference type="CDD" id="cd01894">
    <property type="entry name" value="EngA1"/>
    <property type="match status" value="1"/>
</dbReference>
<dbReference type="CDD" id="cd01895">
    <property type="entry name" value="EngA2"/>
    <property type="match status" value="1"/>
</dbReference>
<dbReference type="FunFam" id="3.30.300.20:FF:000004">
    <property type="entry name" value="GTPase Der"/>
    <property type="match status" value="1"/>
</dbReference>
<dbReference type="FunFam" id="3.40.50.300:FF:000040">
    <property type="entry name" value="GTPase Der"/>
    <property type="match status" value="1"/>
</dbReference>
<dbReference type="FunFam" id="3.40.50.300:FF:000057">
    <property type="entry name" value="GTPase Der"/>
    <property type="match status" value="1"/>
</dbReference>
<dbReference type="Gene3D" id="3.30.300.20">
    <property type="match status" value="1"/>
</dbReference>
<dbReference type="Gene3D" id="3.40.50.300">
    <property type="entry name" value="P-loop containing nucleotide triphosphate hydrolases"/>
    <property type="match status" value="2"/>
</dbReference>
<dbReference type="HAMAP" id="MF_00195">
    <property type="entry name" value="GTPase_Der"/>
    <property type="match status" value="1"/>
</dbReference>
<dbReference type="InterPro" id="IPR031166">
    <property type="entry name" value="G_ENGA"/>
</dbReference>
<dbReference type="InterPro" id="IPR006073">
    <property type="entry name" value="GTP-bd"/>
</dbReference>
<dbReference type="InterPro" id="IPR016484">
    <property type="entry name" value="GTPase_Der"/>
</dbReference>
<dbReference type="InterPro" id="IPR032859">
    <property type="entry name" value="KH_dom-like"/>
</dbReference>
<dbReference type="InterPro" id="IPR015946">
    <property type="entry name" value="KH_dom-like_a/b"/>
</dbReference>
<dbReference type="InterPro" id="IPR027417">
    <property type="entry name" value="P-loop_NTPase"/>
</dbReference>
<dbReference type="InterPro" id="IPR005225">
    <property type="entry name" value="Small_GTP-bd"/>
</dbReference>
<dbReference type="NCBIfam" id="TIGR03594">
    <property type="entry name" value="GTPase_EngA"/>
    <property type="match status" value="1"/>
</dbReference>
<dbReference type="NCBIfam" id="TIGR00231">
    <property type="entry name" value="small_GTP"/>
    <property type="match status" value="2"/>
</dbReference>
<dbReference type="PANTHER" id="PTHR43834">
    <property type="entry name" value="GTPASE DER"/>
    <property type="match status" value="1"/>
</dbReference>
<dbReference type="PANTHER" id="PTHR43834:SF6">
    <property type="entry name" value="GTPASE DER"/>
    <property type="match status" value="1"/>
</dbReference>
<dbReference type="Pfam" id="PF14714">
    <property type="entry name" value="KH_dom-like"/>
    <property type="match status" value="1"/>
</dbReference>
<dbReference type="Pfam" id="PF01926">
    <property type="entry name" value="MMR_HSR1"/>
    <property type="match status" value="2"/>
</dbReference>
<dbReference type="PIRSF" id="PIRSF006485">
    <property type="entry name" value="GTP-binding_EngA"/>
    <property type="match status" value="1"/>
</dbReference>
<dbReference type="PRINTS" id="PR00326">
    <property type="entry name" value="GTP1OBG"/>
</dbReference>
<dbReference type="SUPFAM" id="SSF52540">
    <property type="entry name" value="P-loop containing nucleoside triphosphate hydrolases"/>
    <property type="match status" value="2"/>
</dbReference>
<dbReference type="PROSITE" id="PS51712">
    <property type="entry name" value="G_ENGA"/>
    <property type="match status" value="2"/>
</dbReference>
<sequence length="496" mass="55429">MIPVIALVGRPNVGKSTLFNRLTRTRDALVADFPGLTRDRKYGRAELDGEEFIIIDTGGIDGAEEGVETHMASQSLQAIQEADIVLFLVDARAGLMPADQGIAKHLRGVEKKTYLVANKTDGIDIDTALADFYSLGLGEIFPIAASHGRGVSQLIEQALLPIVGKFVEEEKELTEEEENAAYWAALEAEQKEQEEEEEEDDFDPTTLPVKLAIVGRPNVGKSTLTNRMLGEERVVVYDMPGTTRDSIYIPMERDGKEYILIDTAGVRKRGKVKETVEKFSVIKTLQAIEDCNVALLVIDAREGISDQDLSLLGYILNSGRSLVIAVNKWDGMTQEDREQVKDMLDLKLGFVDFARVHFISALHGSGVGNLFESIQEAYTCATRRVGTSMLTRIMKMAEDDHQPPLIRGRRVKMKYAHAGGYNPPVVVIHGNQVSDLPDSYKRYLMNYFRRTLQVMGTPIRIQFKEGENPYADKKNKLTASQIRKRKRLMAHLKKSK</sequence>
<keyword id="KW-0342">GTP-binding</keyword>
<keyword id="KW-0547">Nucleotide-binding</keyword>
<keyword id="KW-1185">Reference proteome</keyword>
<keyword id="KW-0677">Repeat</keyword>
<keyword id="KW-0690">Ribosome biogenesis</keyword>
<accession>B4EZS9</accession>